<comment type="function">
    <text evidence="2">Component of the ubiquinol-cytochrome c reductase complex (complex III or cytochrome b-c1 complex) that is part of the mitochondrial respiratory chain. The b-c1 complex mediates electron transfer from ubiquinol to cytochrome c. Contributes to the generation of a proton gradient across the mitochondrial membrane that is then used for ATP synthesis.</text>
</comment>
<comment type="cofactor">
    <cofactor evidence="2">
        <name>heme b</name>
        <dbReference type="ChEBI" id="CHEBI:60344"/>
    </cofactor>
    <text evidence="2">Binds 2 heme b groups non-covalently.</text>
</comment>
<comment type="subunit">
    <text evidence="2">The cytochrome bc1 complex contains 11 subunits: 3 respiratory subunits (MT-CYB, CYC1 and UQCRFS1), 2 core proteins (UQCRC1 and UQCRC2) and 6 low-molecular weight proteins (UQCRH/QCR6, UQCRB/QCR7, UQCRQ/QCR8, UQCR10/QCR9, UQCR11/QCR10 and a cleavage product of UQCRFS1). This cytochrome bc1 complex then forms a dimer.</text>
</comment>
<comment type="subcellular location">
    <subcellularLocation>
        <location evidence="2">Mitochondrion inner membrane</location>
        <topology evidence="2">Multi-pass membrane protein</topology>
    </subcellularLocation>
</comment>
<comment type="miscellaneous">
    <text evidence="1">Heme 1 (or BL or b562) is low-potential and absorbs at about 562 nm, and heme 2 (or BH or b566) is high-potential and absorbs at about 566 nm.</text>
</comment>
<comment type="similarity">
    <text evidence="3 4">Belongs to the cytochrome b family.</text>
</comment>
<comment type="caution">
    <text evidence="2">The full-length protein contains only eight transmembrane helices, not nine as predicted by bioinformatics tools.</text>
</comment>
<dbReference type="EMBL" id="AF034737">
    <property type="protein sequence ID" value="AAC31692.1"/>
    <property type="molecule type" value="Genomic_DNA"/>
</dbReference>
<dbReference type="SMR" id="O78787"/>
<dbReference type="GO" id="GO:0005743">
    <property type="term" value="C:mitochondrial inner membrane"/>
    <property type="evidence" value="ECO:0007669"/>
    <property type="project" value="UniProtKB-SubCell"/>
</dbReference>
<dbReference type="GO" id="GO:0045275">
    <property type="term" value="C:respiratory chain complex III"/>
    <property type="evidence" value="ECO:0007669"/>
    <property type="project" value="InterPro"/>
</dbReference>
<dbReference type="GO" id="GO:0046872">
    <property type="term" value="F:metal ion binding"/>
    <property type="evidence" value="ECO:0007669"/>
    <property type="project" value="UniProtKB-KW"/>
</dbReference>
<dbReference type="GO" id="GO:0008121">
    <property type="term" value="F:ubiquinol-cytochrome-c reductase activity"/>
    <property type="evidence" value="ECO:0007669"/>
    <property type="project" value="InterPro"/>
</dbReference>
<dbReference type="GO" id="GO:0006122">
    <property type="term" value="P:mitochondrial electron transport, ubiquinol to cytochrome c"/>
    <property type="evidence" value="ECO:0007669"/>
    <property type="project" value="TreeGrafter"/>
</dbReference>
<dbReference type="CDD" id="cd00290">
    <property type="entry name" value="cytochrome_b_C"/>
    <property type="match status" value="1"/>
</dbReference>
<dbReference type="CDD" id="cd00284">
    <property type="entry name" value="Cytochrome_b_N"/>
    <property type="match status" value="1"/>
</dbReference>
<dbReference type="FunFam" id="1.20.810.10:FF:000002">
    <property type="entry name" value="Cytochrome b"/>
    <property type="match status" value="1"/>
</dbReference>
<dbReference type="Gene3D" id="1.20.810.10">
    <property type="entry name" value="Cytochrome Bc1 Complex, Chain C"/>
    <property type="match status" value="1"/>
</dbReference>
<dbReference type="InterPro" id="IPR005798">
    <property type="entry name" value="Cyt_b/b6_C"/>
</dbReference>
<dbReference type="InterPro" id="IPR036150">
    <property type="entry name" value="Cyt_b/b6_C_sf"/>
</dbReference>
<dbReference type="InterPro" id="IPR005797">
    <property type="entry name" value="Cyt_b/b6_N"/>
</dbReference>
<dbReference type="InterPro" id="IPR027387">
    <property type="entry name" value="Cytb/b6-like_sf"/>
</dbReference>
<dbReference type="InterPro" id="IPR030689">
    <property type="entry name" value="Cytochrome_b"/>
</dbReference>
<dbReference type="InterPro" id="IPR048260">
    <property type="entry name" value="Cytochrome_b_C_euk/bac"/>
</dbReference>
<dbReference type="InterPro" id="IPR048259">
    <property type="entry name" value="Cytochrome_b_N_euk/bac"/>
</dbReference>
<dbReference type="InterPro" id="IPR016174">
    <property type="entry name" value="Di-haem_cyt_TM"/>
</dbReference>
<dbReference type="PANTHER" id="PTHR19271">
    <property type="entry name" value="CYTOCHROME B"/>
    <property type="match status" value="1"/>
</dbReference>
<dbReference type="PANTHER" id="PTHR19271:SF16">
    <property type="entry name" value="CYTOCHROME B"/>
    <property type="match status" value="1"/>
</dbReference>
<dbReference type="Pfam" id="PF00032">
    <property type="entry name" value="Cytochrom_B_C"/>
    <property type="match status" value="1"/>
</dbReference>
<dbReference type="Pfam" id="PF00033">
    <property type="entry name" value="Cytochrome_B"/>
    <property type="match status" value="1"/>
</dbReference>
<dbReference type="PIRSF" id="PIRSF038885">
    <property type="entry name" value="COB"/>
    <property type="match status" value="1"/>
</dbReference>
<dbReference type="SUPFAM" id="SSF81648">
    <property type="entry name" value="a domain/subunit of cytochrome bc1 complex (Ubiquinol-cytochrome c reductase)"/>
    <property type="match status" value="1"/>
</dbReference>
<dbReference type="SUPFAM" id="SSF81342">
    <property type="entry name" value="Transmembrane di-heme cytochromes"/>
    <property type="match status" value="1"/>
</dbReference>
<dbReference type="PROSITE" id="PS51003">
    <property type="entry name" value="CYTB_CTER"/>
    <property type="match status" value="1"/>
</dbReference>
<dbReference type="PROSITE" id="PS51002">
    <property type="entry name" value="CYTB_NTER"/>
    <property type="match status" value="1"/>
</dbReference>
<accession>O78787</accession>
<sequence>MTNIRKTHPLMKIVNNAFIDLPTPSNISSWWNFGSLLGICLILQILTGLFLAMHYTSDTMTAFSSVTHICRDVNYGWIIRYMHANGASMFFICLFMHVGRGLYYGSYTFLETWNIGVILLLATMATAFMGYVLPWGQMSFWGATVITNLLSAIPYIGTNLVEWIWGGFSVDKATLTRFFAFHFILPFIIAALAMVHLLFLHETGSNNPTGIPSDTDKIPFHPYYTIKDILGVMLLILVLMLLVLFTPDLLGDPDNYIPANPLNTPPHIKPEWYFLFAYAILRSIPNKLGGVLALVLSILILVLVPFLHTSKQRSMMFRPISQCMFWILVADLLTLTWIGGQPVEHPYIIIGQLASIMYFLIILVMMPVASTIENNLLKW</sequence>
<keyword id="KW-0249">Electron transport</keyword>
<keyword id="KW-0349">Heme</keyword>
<keyword id="KW-0408">Iron</keyword>
<keyword id="KW-0472">Membrane</keyword>
<keyword id="KW-0479">Metal-binding</keyword>
<keyword id="KW-0496">Mitochondrion</keyword>
<keyword id="KW-0999">Mitochondrion inner membrane</keyword>
<keyword id="KW-0679">Respiratory chain</keyword>
<keyword id="KW-0812">Transmembrane</keyword>
<keyword id="KW-1133">Transmembrane helix</keyword>
<keyword id="KW-0813">Transport</keyword>
<keyword id="KW-0830">Ubiquinone</keyword>
<reference key="1">
    <citation type="journal article" date="1998" name="J. Mammal. Evol.">
        <title>Molecular systematics of the subfamily Caprinae (Artiodactyla, Bovidae) as determined from cytochrome b sequences.</title>
        <authorList>
            <person name="Hassanin A."/>
            <person name="Pasquet E."/>
            <person name="Vigne J.-D."/>
        </authorList>
    </citation>
    <scope>NUCLEOTIDE SEQUENCE [GENOMIC DNA]</scope>
</reference>
<geneLocation type="mitochondrion"/>
<proteinExistence type="inferred from homology"/>
<evidence type="ECO:0000250" key="1"/>
<evidence type="ECO:0000250" key="2">
    <source>
        <dbReference type="UniProtKB" id="P00157"/>
    </source>
</evidence>
<evidence type="ECO:0000255" key="3">
    <source>
        <dbReference type="PROSITE-ProRule" id="PRU00967"/>
    </source>
</evidence>
<evidence type="ECO:0000255" key="4">
    <source>
        <dbReference type="PROSITE-ProRule" id="PRU00968"/>
    </source>
</evidence>
<organism>
    <name type="scientific">Capra cylindricornis</name>
    <name type="common">East Caucasian tur</name>
    <name type="synonym">Capra caucasica cylindricornis</name>
    <dbReference type="NCBI Taxonomy" id="72541"/>
    <lineage>
        <taxon>Eukaryota</taxon>
        <taxon>Metazoa</taxon>
        <taxon>Chordata</taxon>
        <taxon>Craniata</taxon>
        <taxon>Vertebrata</taxon>
        <taxon>Euteleostomi</taxon>
        <taxon>Mammalia</taxon>
        <taxon>Eutheria</taxon>
        <taxon>Laurasiatheria</taxon>
        <taxon>Artiodactyla</taxon>
        <taxon>Ruminantia</taxon>
        <taxon>Pecora</taxon>
        <taxon>Bovidae</taxon>
        <taxon>Caprinae</taxon>
        <taxon>Capra</taxon>
    </lineage>
</organism>
<protein>
    <recommendedName>
        <fullName>Cytochrome b</fullName>
    </recommendedName>
    <alternativeName>
        <fullName>Complex III subunit 3</fullName>
    </alternativeName>
    <alternativeName>
        <fullName>Complex III subunit III</fullName>
    </alternativeName>
    <alternativeName>
        <fullName>Cytochrome b-c1 complex subunit 3</fullName>
    </alternativeName>
    <alternativeName>
        <fullName>Ubiquinol-cytochrome-c reductase complex cytochrome b subunit</fullName>
    </alternativeName>
</protein>
<gene>
    <name type="primary">MT-CYB</name>
    <name type="synonym">COB</name>
    <name type="synonym">CYTB</name>
    <name type="synonym">MTCYB</name>
</gene>
<name>CYB_CAPCY</name>
<feature type="chain" id="PRO_0000060723" description="Cytochrome b">
    <location>
        <begin position="1"/>
        <end position="379"/>
    </location>
</feature>
<feature type="transmembrane region" description="Helical" evidence="2">
    <location>
        <begin position="33"/>
        <end position="53"/>
    </location>
</feature>
<feature type="transmembrane region" description="Helical" evidence="2">
    <location>
        <begin position="77"/>
        <end position="98"/>
    </location>
</feature>
<feature type="transmembrane region" description="Helical" evidence="2">
    <location>
        <begin position="113"/>
        <end position="133"/>
    </location>
</feature>
<feature type="transmembrane region" description="Helical" evidence="2">
    <location>
        <begin position="178"/>
        <end position="198"/>
    </location>
</feature>
<feature type="transmembrane region" description="Helical" evidence="2">
    <location>
        <begin position="226"/>
        <end position="246"/>
    </location>
</feature>
<feature type="transmembrane region" description="Helical" evidence="2">
    <location>
        <begin position="288"/>
        <end position="308"/>
    </location>
</feature>
<feature type="transmembrane region" description="Helical" evidence="2">
    <location>
        <begin position="320"/>
        <end position="340"/>
    </location>
</feature>
<feature type="transmembrane region" description="Helical" evidence="2">
    <location>
        <begin position="347"/>
        <end position="367"/>
    </location>
</feature>
<feature type="binding site" description="axial binding residue" evidence="2">
    <location>
        <position position="83"/>
    </location>
    <ligand>
        <name>heme b</name>
        <dbReference type="ChEBI" id="CHEBI:60344"/>
        <label>b562</label>
    </ligand>
    <ligandPart>
        <name>Fe</name>
        <dbReference type="ChEBI" id="CHEBI:18248"/>
    </ligandPart>
</feature>
<feature type="binding site" description="axial binding residue" evidence="2">
    <location>
        <position position="97"/>
    </location>
    <ligand>
        <name>heme b</name>
        <dbReference type="ChEBI" id="CHEBI:60344"/>
        <label>b566</label>
    </ligand>
    <ligandPart>
        <name>Fe</name>
        <dbReference type="ChEBI" id="CHEBI:18248"/>
    </ligandPart>
</feature>
<feature type="binding site" description="axial binding residue" evidence="2">
    <location>
        <position position="182"/>
    </location>
    <ligand>
        <name>heme b</name>
        <dbReference type="ChEBI" id="CHEBI:60344"/>
        <label>b562</label>
    </ligand>
    <ligandPart>
        <name>Fe</name>
        <dbReference type="ChEBI" id="CHEBI:18248"/>
    </ligandPart>
</feature>
<feature type="binding site" description="axial binding residue" evidence="2">
    <location>
        <position position="196"/>
    </location>
    <ligand>
        <name>heme b</name>
        <dbReference type="ChEBI" id="CHEBI:60344"/>
        <label>b566</label>
    </ligand>
    <ligandPart>
        <name>Fe</name>
        <dbReference type="ChEBI" id="CHEBI:18248"/>
    </ligandPart>
</feature>
<feature type="binding site" evidence="2">
    <location>
        <position position="201"/>
    </location>
    <ligand>
        <name>a ubiquinone</name>
        <dbReference type="ChEBI" id="CHEBI:16389"/>
    </ligand>
</feature>